<comment type="function">
    <text evidence="1">Located at the top of the head of the 30S subunit, it contacts several helices of the 16S rRNA. In the 70S ribosome it contacts the 23S rRNA (bridge B1a) and protein L5 of the 50S subunit (bridge B1b), connecting the 2 subunits; these bridges are implicated in subunit movement. Contacts the tRNAs in the A and P-sites.</text>
</comment>
<comment type="subunit">
    <text evidence="1">Part of the 30S ribosomal subunit. Forms a loose heterodimer with protein S19. Forms two bridges to the 50S subunit in the 70S ribosome.</text>
</comment>
<comment type="similarity">
    <text evidence="1">Belongs to the universal ribosomal protein uS13 family.</text>
</comment>
<proteinExistence type="inferred from homology"/>
<organism>
    <name type="scientific">Mycobacterium tuberculosis (strain CDC 1551 / Oshkosh)</name>
    <dbReference type="NCBI Taxonomy" id="83331"/>
    <lineage>
        <taxon>Bacteria</taxon>
        <taxon>Bacillati</taxon>
        <taxon>Actinomycetota</taxon>
        <taxon>Actinomycetes</taxon>
        <taxon>Mycobacteriales</taxon>
        <taxon>Mycobacteriaceae</taxon>
        <taxon>Mycobacterium</taxon>
        <taxon>Mycobacterium tuberculosis complex</taxon>
    </lineage>
</organism>
<sequence>MARLVGVDLPRDKRMEVALTYIFGIGRTRSNEILAATGIDRDLRTRDLTEEQLIHLRDYIEANLKVEGDLRREVQADIRRKIEIGCYQGLRHRRGMPVRGQRTKTNARTRKGPKRTIAGKKKAR</sequence>
<reference key="1">
    <citation type="journal article" date="2002" name="J. Bacteriol.">
        <title>Whole-genome comparison of Mycobacterium tuberculosis clinical and laboratory strains.</title>
        <authorList>
            <person name="Fleischmann R.D."/>
            <person name="Alland D."/>
            <person name="Eisen J.A."/>
            <person name="Carpenter L."/>
            <person name="White O."/>
            <person name="Peterson J.D."/>
            <person name="DeBoy R.T."/>
            <person name="Dodson R.J."/>
            <person name="Gwinn M.L."/>
            <person name="Haft D.H."/>
            <person name="Hickey E.K."/>
            <person name="Kolonay J.F."/>
            <person name="Nelson W.C."/>
            <person name="Umayam L.A."/>
            <person name="Ermolaeva M.D."/>
            <person name="Salzberg S.L."/>
            <person name="Delcher A."/>
            <person name="Utterback T.R."/>
            <person name="Weidman J.F."/>
            <person name="Khouri H.M."/>
            <person name="Gill J."/>
            <person name="Mikula A."/>
            <person name="Bishai W."/>
            <person name="Jacobs W.R. Jr."/>
            <person name="Venter J.C."/>
            <person name="Fraser C.M."/>
        </authorList>
    </citation>
    <scope>NUCLEOTIDE SEQUENCE [LARGE SCALE GENOMIC DNA]</scope>
    <source>
        <strain>CDC 1551 / Oshkosh</strain>
    </source>
</reference>
<accession>P9WH60</accession>
<accession>L0TE71</accession>
<accession>O06327</accession>
<name>RS13_MYCTO</name>
<feature type="chain" id="PRO_0000428243" description="Small ribosomal subunit protein uS13">
    <location>
        <begin position="1"/>
        <end position="124"/>
    </location>
</feature>
<feature type="region of interest" description="Disordered" evidence="2">
    <location>
        <begin position="94"/>
        <end position="124"/>
    </location>
</feature>
<keyword id="KW-1185">Reference proteome</keyword>
<keyword id="KW-0687">Ribonucleoprotein</keyword>
<keyword id="KW-0689">Ribosomal protein</keyword>
<keyword id="KW-0694">RNA-binding</keyword>
<keyword id="KW-0699">rRNA-binding</keyword>
<keyword id="KW-0820">tRNA-binding</keyword>
<dbReference type="EMBL" id="AE000516">
    <property type="protein sequence ID" value="AAK47906.1"/>
    <property type="molecule type" value="Genomic_DNA"/>
</dbReference>
<dbReference type="PIR" id="A70566">
    <property type="entry name" value="A70566"/>
</dbReference>
<dbReference type="RefSeq" id="WP_003418360.1">
    <property type="nucleotide sequence ID" value="NZ_KK341227.1"/>
</dbReference>
<dbReference type="SMR" id="P9WH60"/>
<dbReference type="GeneID" id="45427449"/>
<dbReference type="KEGG" id="mtc:MT3567"/>
<dbReference type="PATRIC" id="fig|83331.31.peg.3824"/>
<dbReference type="HOGENOM" id="CLU_103849_1_2_11"/>
<dbReference type="Proteomes" id="UP000001020">
    <property type="component" value="Chromosome"/>
</dbReference>
<dbReference type="GO" id="GO:0005829">
    <property type="term" value="C:cytosol"/>
    <property type="evidence" value="ECO:0007669"/>
    <property type="project" value="TreeGrafter"/>
</dbReference>
<dbReference type="GO" id="GO:0015935">
    <property type="term" value="C:small ribosomal subunit"/>
    <property type="evidence" value="ECO:0007669"/>
    <property type="project" value="TreeGrafter"/>
</dbReference>
<dbReference type="GO" id="GO:0019843">
    <property type="term" value="F:rRNA binding"/>
    <property type="evidence" value="ECO:0007669"/>
    <property type="project" value="UniProtKB-UniRule"/>
</dbReference>
<dbReference type="GO" id="GO:0003735">
    <property type="term" value="F:structural constituent of ribosome"/>
    <property type="evidence" value="ECO:0007669"/>
    <property type="project" value="InterPro"/>
</dbReference>
<dbReference type="GO" id="GO:0000049">
    <property type="term" value="F:tRNA binding"/>
    <property type="evidence" value="ECO:0007669"/>
    <property type="project" value="UniProtKB-UniRule"/>
</dbReference>
<dbReference type="GO" id="GO:0006412">
    <property type="term" value="P:translation"/>
    <property type="evidence" value="ECO:0007669"/>
    <property type="project" value="UniProtKB-UniRule"/>
</dbReference>
<dbReference type="FunFam" id="1.10.8.50:FF:000001">
    <property type="entry name" value="30S ribosomal protein S13"/>
    <property type="match status" value="1"/>
</dbReference>
<dbReference type="FunFam" id="4.10.910.10:FF:000001">
    <property type="entry name" value="30S ribosomal protein S13"/>
    <property type="match status" value="1"/>
</dbReference>
<dbReference type="Gene3D" id="1.10.8.50">
    <property type="match status" value="1"/>
</dbReference>
<dbReference type="Gene3D" id="4.10.910.10">
    <property type="entry name" value="30s ribosomal protein s13, domain 2"/>
    <property type="match status" value="1"/>
</dbReference>
<dbReference type="HAMAP" id="MF_01315">
    <property type="entry name" value="Ribosomal_uS13"/>
    <property type="match status" value="1"/>
</dbReference>
<dbReference type="InterPro" id="IPR027437">
    <property type="entry name" value="Rbsml_uS13_C"/>
</dbReference>
<dbReference type="InterPro" id="IPR001892">
    <property type="entry name" value="Ribosomal_uS13"/>
</dbReference>
<dbReference type="InterPro" id="IPR010979">
    <property type="entry name" value="Ribosomal_uS13-like_H2TH"/>
</dbReference>
<dbReference type="InterPro" id="IPR019980">
    <property type="entry name" value="Ribosomal_uS13_bac-type"/>
</dbReference>
<dbReference type="InterPro" id="IPR018269">
    <property type="entry name" value="Ribosomal_uS13_CS"/>
</dbReference>
<dbReference type="NCBIfam" id="TIGR03631">
    <property type="entry name" value="uS13_bact"/>
    <property type="match status" value="1"/>
</dbReference>
<dbReference type="PANTHER" id="PTHR10871">
    <property type="entry name" value="30S RIBOSOMAL PROTEIN S13/40S RIBOSOMAL PROTEIN S18"/>
    <property type="match status" value="1"/>
</dbReference>
<dbReference type="PANTHER" id="PTHR10871:SF1">
    <property type="entry name" value="SMALL RIBOSOMAL SUBUNIT PROTEIN US13M"/>
    <property type="match status" value="1"/>
</dbReference>
<dbReference type="Pfam" id="PF00416">
    <property type="entry name" value="Ribosomal_S13"/>
    <property type="match status" value="1"/>
</dbReference>
<dbReference type="PIRSF" id="PIRSF002134">
    <property type="entry name" value="Ribosomal_S13"/>
    <property type="match status" value="1"/>
</dbReference>
<dbReference type="SUPFAM" id="SSF46946">
    <property type="entry name" value="S13-like H2TH domain"/>
    <property type="match status" value="1"/>
</dbReference>
<dbReference type="PROSITE" id="PS00646">
    <property type="entry name" value="RIBOSOMAL_S13_1"/>
    <property type="match status" value="1"/>
</dbReference>
<dbReference type="PROSITE" id="PS50159">
    <property type="entry name" value="RIBOSOMAL_S13_2"/>
    <property type="match status" value="1"/>
</dbReference>
<protein>
    <recommendedName>
        <fullName evidence="1">Small ribosomal subunit protein uS13</fullName>
    </recommendedName>
    <alternativeName>
        <fullName evidence="3">30S ribosomal protein S13</fullName>
    </alternativeName>
</protein>
<evidence type="ECO:0000255" key="1">
    <source>
        <dbReference type="HAMAP-Rule" id="MF_01315"/>
    </source>
</evidence>
<evidence type="ECO:0000256" key="2">
    <source>
        <dbReference type="SAM" id="MobiDB-lite"/>
    </source>
</evidence>
<evidence type="ECO:0000305" key="3"/>
<gene>
    <name evidence="1" type="primary">rpsM</name>
    <name type="ordered locus">MT3567</name>
</gene>